<dbReference type="EC" id="5.2.1.8" evidence="1"/>
<dbReference type="EMBL" id="CP000127">
    <property type="protein sequence ID" value="ABA58195.1"/>
    <property type="molecule type" value="Genomic_DNA"/>
</dbReference>
<dbReference type="RefSeq" id="WP_002809971.1">
    <property type="nucleotide sequence ID" value="NC_007484.1"/>
</dbReference>
<dbReference type="SMR" id="Q3JAF1"/>
<dbReference type="FunCoup" id="Q3JAF1">
    <property type="interactions" value="166"/>
</dbReference>
<dbReference type="STRING" id="323261.Noc_1723"/>
<dbReference type="KEGG" id="noc:Noc_1723"/>
<dbReference type="eggNOG" id="COG0760">
    <property type="taxonomic scope" value="Bacteria"/>
</dbReference>
<dbReference type="HOGENOM" id="CLU_034646_11_0_6"/>
<dbReference type="InParanoid" id="Q3JAF1"/>
<dbReference type="Proteomes" id="UP000006838">
    <property type="component" value="Chromosome"/>
</dbReference>
<dbReference type="GO" id="GO:0030288">
    <property type="term" value="C:outer membrane-bounded periplasmic space"/>
    <property type="evidence" value="ECO:0007669"/>
    <property type="project" value="InterPro"/>
</dbReference>
<dbReference type="GO" id="GO:0042277">
    <property type="term" value="F:peptide binding"/>
    <property type="evidence" value="ECO:0007669"/>
    <property type="project" value="InterPro"/>
</dbReference>
<dbReference type="GO" id="GO:0003755">
    <property type="term" value="F:peptidyl-prolyl cis-trans isomerase activity"/>
    <property type="evidence" value="ECO:0007669"/>
    <property type="project" value="UniProtKB-UniRule"/>
</dbReference>
<dbReference type="GO" id="GO:0051082">
    <property type="term" value="F:unfolded protein binding"/>
    <property type="evidence" value="ECO:0007669"/>
    <property type="project" value="UniProtKB-UniRule"/>
</dbReference>
<dbReference type="GO" id="GO:0043165">
    <property type="term" value="P:Gram-negative-bacterium-type cell outer membrane assembly"/>
    <property type="evidence" value="ECO:0007669"/>
    <property type="project" value="InterPro"/>
</dbReference>
<dbReference type="GO" id="GO:0006457">
    <property type="term" value="P:protein folding"/>
    <property type="evidence" value="ECO:0007669"/>
    <property type="project" value="UniProtKB-UniRule"/>
</dbReference>
<dbReference type="GO" id="GO:0050821">
    <property type="term" value="P:protein stabilization"/>
    <property type="evidence" value="ECO:0007669"/>
    <property type="project" value="InterPro"/>
</dbReference>
<dbReference type="Gene3D" id="3.10.50.40">
    <property type="match status" value="2"/>
</dbReference>
<dbReference type="Gene3D" id="1.10.4030.10">
    <property type="entry name" value="Porin chaperone SurA, peptide-binding domain"/>
    <property type="match status" value="1"/>
</dbReference>
<dbReference type="HAMAP" id="MF_01183">
    <property type="entry name" value="Chaperone_SurA"/>
    <property type="match status" value="1"/>
</dbReference>
<dbReference type="InterPro" id="IPR050280">
    <property type="entry name" value="OMP_Chaperone_SurA"/>
</dbReference>
<dbReference type="InterPro" id="IPR046357">
    <property type="entry name" value="PPIase_dom_sf"/>
</dbReference>
<dbReference type="InterPro" id="IPR000297">
    <property type="entry name" value="PPIase_PpiC"/>
</dbReference>
<dbReference type="InterPro" id="IPR023058">
    <property type="entry name" value="PPIase_PpiC_CS"/>
</dbReference>
<dbReference type="InterPro" id="IPR023034">
    <property type="entry name" value="PPIase_SurA"/>
</dbReference>
<dbReference type="InterPro" id="IPR015391">
    <property type="entry name" value="SurA_N"/>
</dbReference>
<dbReference type="InterPro" id="IPR027304">
    <property type="entry name" value="Trigger_fact/SurA_dom_sf"/>
</dbReference>
<dbReference type="PANTHER" id="PTHR47637">
    <property type="entry name" value="CHAPERONE SURA"/>
    <property type="match status" value="1"/>
</dbReference>
<dbReference type="PANTHER" id="PTHR47637:SF1">
    <property type="entry name" value="CHAPERONE SURA"/>
    <property type="match status" value="1"/>
</dbReference>
<dbReference type="Pfam" id="PF00639">
    <property type="entry name" value="Rotamase"/>
    <property type="match status" value="1"/>
</dbReference>
<dbReference type="Pfam" id="PF13616">
    <property type="entry name" value="Rotamase_3"/>
    <property type="match status" value="1"/>
</dbReference>
<dbReference type="Pfam" id="PF09312">
    <property type="entry name" value="SurA_N"/>
    <property type="match status" value="1"/>
</dbReference>
<dbReference type="SUPFAM" id="SSF54534">
    <property type="entry name" value="FKBP-like"/>
    <property type="match status" value="2"/>
</dbReference>
<dbReference type="SUPFAM" id="SSF109998">
    <property type="entry name" value="Triger factor/SurA peptide-binding domain-like"/>
    <property type="match status" value="1"/>
</dbReference>
<dbReference type="PROSITE" id="PS01096">
    <property type="entry name" value="PPIC_PPIASE_1"/>
    <property type="match status" value="1"/>
</dbReference>
<dbReference type="PROSITE" id="PS50198">
    <property type="entry name" value="PPIC_PPIASE_2"/>
    <property type="match status" value="2"/>
</dbReference>
<sequence>MGRVLVTIFVLFWPIGSFAAINLDRIVAVVNEDIVLESELEQMVRTVQDQLAAQGTSLPPGYVLERQVLERLVMEQLQLQLAARTGIQVGDETLNEALGRIAQDNGLTLSQFRNVLEQDGYDFPAFRENIRKELIISQLHKREVNDRVSVSKAEIDNFLTNQKKRGNQDAQYHLAHILITVPEAASPEQVQAAKAKAEQVLQQLREGADFQKVAVTYSDGQQALEGGDLGWRKMGQLPTLFVDVVPQLQAGDISKLIRSPSGFHIVKLLDYRGEGQQQLVTQTQARHILLRADELASEREVQLRLSQLRQRILSGDDFSELAQAHSDDKASALKGGDLGWVSPGQMIPRFEEAMRSLEPGEISEPFKTQFGWHVVQVLDRRQENMTEEFNRNRAKMEIRQRKVEEELENWLRQLRDEAYVEYRLDN</sequence>
<keyword id="KW-0143">Chaperone</keyword>
<keyword id="KW-0413">Isomerase</keyword>
<keyword id="KW-0574">Periplasm</keyword>
<keyword id="KW-1185">Reference proteome</keyword>
<keyword id="KW-0677">Repeat</keyword>
<keyword id="KW-0697">Rotamase</keyword>
<keyword id="KW-0732">Signal</keyword>
<comment type="function">
    <text evidence="1">Chaperone involved in the correct folding and assembly of outer membrane proteins. Recognizes specific patterns of aromatic residues and the orientation of their side chains, which are found more frequently in integral outer membrane proteins. May act in both early periplasmic and late outer membrane-associated steps of protein maturation.</text>
</comment>
<comment type="catalytic activity">
    <reaction evidence="1">
        <text>[protein]-peptidylproline (omega=180) = [protein]-peptidylproline (omega=0)</text>
        <dbReference type="Rhea" id="RHEA:16237"/>
        <dbReference type="Rhea" id="RHEA-COMP:10747"/>
        <dbReference type="Rhea" id="RHEA-COMP:10748"/>
        <dbReference type="ChEBI" id="CHEBI:83833"/>
        <dbReference type="ChEBI" id="CHEBI:83834"/>
        <dbReference type="EC" id="5.2.1.8"/>
    </reaction>
</comment>
<comment type="subcellular location">
    <subcellularLocation>
        <location evidence="1">Periplasm</location>
    </subcellularLocation>
    <text evidence="1">Is capable of associating with the outer membrane.</text>
</comment>
<comment type="domain">
    <text evidence="1">The PPIase activity resides only in the second parvulin domain. The N-terminal region and the C-terminal tail are necessary and sufficient for the chaperone activity of SurA. The PPIase activity is dispensable for SurA to function as a chaperone. The N-terminal region and the C-terminal tail are also required for porin recognition.</text>
</comment>
<gene>
    <name evidence="1" type="primary">surA</name>
    <name type="ordered locus">Noc_1723</name>
</gene>
<name>SURA_NITOC</name>
<proteinExistence type="inferred from homology"/>
<evidence type="ECO:0000255" key="1">
    <source>
        <dbReference type="HAMAP-Rule" id="MF_01183"/>
    </source>
</evidence>
<feature type="signal peptide" evidence="1">
    <location>
        <begin position="1"/>
        <end position="19"/>
    </location>
</feature>
<feature type="chain" id="PRO_5000104758" description="Chaperone SurA">
    <location>
        <begin position="20"/>
        <end position="426"/>
    </location>
</feature>
<feature type="domain" description="PpiC 1" evidence="1">
    <location>
        <begin position="169"/>
        <end position="270"/>
    </location>
</feature>
<feature type="domain" description="PpiC 2" evidence="1">
    <location>
        <begin position="280"/>
        <end position="379"/>
    </location>
</feature>
<accession>Q3JAF1</accession>
<protein>
    <recommendedName>
        <fullName evidence="1">Chaperone SurA</fullName>
    </recommendedName>
    <alternativeName>
        <fullName evidence="1">Peptidyl-prolyl cis-trans isomerase SurA</fullName>
        <shortName evidence="1">PPIase SurA</shortName>
        <ecNumber evidence="1">5.2.1.8</ecNumber>
    </alternativeName>
    <alternativeName>
        <fullName evidence="1">Rotamase SurA</fullName>
    </alternativeName>
</protein>
<reference key="1">
    <citation type="journal article" date="2006" name="Appl. Environ. Microbiol.">
        <title>Complete genome sequence of the marine, chemolithoautotrophic, ammonia-oxidizing bacterium Nitrosococcus oceani ATCC 19707.</title>
        <authorList>
            <person name="Klotz M.G."/>
            <person name="Arp D.J."/>
            <person name="Chain P.S.G."/>
            <person name="El-Sheikh A.F."/>
            <person name="Hauser L.J."/>
            <person name="Hommes N.G."/>
            <person name="Larimer F.W."/>
            <person name="Malfatti S.A."/>
            <person name="Norton J.M."/>
            <person name="Poret-Peterson A.T."/>
            <person name="Vergez L.M."/>
            <person name="Ward B.B."/>
        </authorList>
    </citation>
    <scope>NUCLEOTIDE SEQUENCE [LARGE SCALE GENOMIC DNA]</scope>
    <source>
        <strain>ATCC 19707 / BCRC 17464 / JCM 30415 / NCIMB 11848 / C-107</strain>
    </source>
</reference>
<organism>
    <name type="scientific">Nitrosococcus oceani (strain ATCC 19707 / BCRC 17464 / JCM 30415 / NCIMB 11848 / C-107)</name>
    <dbReference type="NCBI Taxonomy" id="323261"/>
    <lineage>
        <taxon>Bacteria</taxon>
        <taxon>Pseudomonadati</taxon>
        <taxon>Pseudomonadota</taxon>
        <taxon>Gammaproteobacteria</taxon>
        <taxon>Chromatiales</taxon>
        <taxon>Chromatiaceae</taxon>
        <taxon>Nitrosococcus</taxon>
    </lineage>
</organism>